<proteinExistence type="evidence at transcript level"/>
<evidence type="ECO:0000250" key="1"/>
<evidence type="ECO:0000250" key="2">
    <source>
        <dbReference type="UniProtKB" id="Q9NQ92"/>
    </source>
</evidence>
<evidence type="ECO:0000256" key="3">
    <source>
        <dbReference type="SAM" id="MobiDB-lite"/>
    </source>
</evidence>
<accession>A5PJD3</accession>
<dbReference type="EMBL" id="BC142058">
    <property type="protein sequence ID" value="AAI42059.1"/>
    <property type="molecule type" value="mRNA"/>
</dbReference>
<dbReference type="RefSeq" id="NP_001092364.1">
    <property type="nucleotide sequence ID" value="NM_001098894.2"/>
</dbReference>
<dbReference type="RefSeq" id="XP_010814057.1">
    <property type="nucleotide sequence ID" value="XM_010815755.2"/>
</dbReference>
<dbReference type="FunCoup" id="A5PJD3">
    <property type="interactions" value="882"/>
</dbReference>
<dbReference type="STRING" id="9913.ENSBTAP00000060660"/>
<dbReference type="PaxDb" id="9913-ENSBTAP00000002453"/>
<dbReference type="GeneID" id="506999"/>
<dbReference type="KEGG" id="bta:506999"/>
<dbReference type="CTD" id="55352"/>
<dbReference type="VEuPathDB" id="HostDB:ENSBTAG00000049483"/>
<dbReference type="eggNOG" id="ENOG502ST7I">
    <property type="taxonomic scope" value="Eukaryota"/>
</dbReference>
<dbReference type="HOGENOM" id="CLU_126074_0_0_1"/>
<dbReference type="InParanoid" id="A5PJD3"/>
<dbReference type="OMA" id="IPTHGED"/>
<dbReference type="OrthoDB" id="9451728at2759"/>
<dbReference type="TreeFam" id="TF338109"/>
<dbReference type="Reactome" id="R-BTA-3214858">
    <property type="pathway name" value="RMTs methylate histone arginines"/>
</dbReference>
<dbReference type="Proteomes" id="UP000009136">
    <property type="component" value="Chromosome 19"/>
</dbReference>
<dbReference type="Bgee" id="ENSBTAG00000049483">
    <property type="expression patterns" value="Expressed in semen and 104 other cell types or tissues"/>
</dbReference>
<dbReference type="GO" id="GO:0005634">
    <property type="term" value="C:nucleus"/>
    <property type="evidence" value="ECO:0000250"/>
    <property type="project" value="UniProtKB"/>
</dbReference>
<dbReference type="GO" id="GO:0042393">
    <property type="term" value="F:histone binding"/>
    <property type="evidence" value="ECO:0000250"/>
    <property type="project" value="UniProtKB"/>
</dbReference>
<dbReference type="GO" id="GO:0006338">
    <property type="term" value="P:chromatin remodeling"/>
    <property type="evidence" value="ECO:0000250"/>
    <property type="project" value="UniProtKB"/>
</dbReference>
<dbReference type="GO" id="GO:0007517">
    <property type="term" value="P:muscle organ development"/>
    <property type="evidence" value="ECO:0000250"/>
    <property type="project" value="UniProtKB"/>
</dbReference>
<dbReference type="InterPro" id="IPR029289">
    <property type="entry name" value="COPR5"/>
</dbReference>
<dbReference type="PANTHER" id="PTHR36461">
    <property type="entry name" value="COORDINATOR OF PRMT5 AND DIFFERENTIATION STIMULATOR"/>
    <property type="match status" value="1"/>
</dbReference>
<dbReference type="PANTHER" id="PTHR36461:SF1">
    <property type="entry name" value="COORDINATOR OF PRMT5 AND DIFFERENTIATION STIMULATOR"/>
    <property type="match status" value="1"/>
</dbReference>
<dbReference type="Pfam" id="PF15340">
    <property type="entry name" value="COPR5"/>
    <property type="match status" value="1"/>
</dbReference>
<organism>
    <name type="scientific">Bos taurus</name>
    <name type="common">Bovine</name>
    <dbReference type="NCBI Taxonomy" id="9913"/>
    <lineage>
        <taxon>Eukaryota</taxon>
        <taxon>Metazoa</taxon>
        <taxon>Chordata</taxon>
        <taxon>Craniata</taxon>
        <taxon>Vertebrata</taxon>
        <taxon>Euteleostomi</taxon>
        <taxon>Mammalia</taxon>
        <taxon>Eutheria</taxon>
        <taxon>Laurasiatheria</taxon>
        <taxon>Artiodactyla</taxon>
        <taxon>Ruminantia</taxon>
        <taxon>Pecora</taxon>
        <taxon>Bovidae</taxon>
        <taxon>Bovinae</taxon>
        <taxon>Bos</taxon>
    </lineage>
</organism>
<name>COPRS_BOVIN</name>
<protein>
    <recommendedName>
        <fullName>Coordinator of PRMT5 and differentiation stimulator</fullName>
    </recommendedName>
    <alternativeName>
        <fullName>Cooperator of PRMT5</fullName>
    </alternativeName>
</protein>
<feature type="chain" id="PRO_0000336076" description="Coordinator of PRMT5 and differentiation stimulator">
    <location>
        <begin position="1"/>
        <end position="185"/>
    </location>
</feature>
<feature type="region of interest" description="Disordered" evidence="3">
    <location>
        <begin position="1"/>
        <end position="109"/>
    </location>
</feature>
<feature type="compositionally biased region" description="Basic and acidic residues" evidence="3">
    <location>
        <begin position="42"/>
        <end position="52"/>
    </location>
</feature>
<feature type="compositionally biased region" description="Basic and acidic residues" evidence="3">
    <location>
        <begin position="66"/>
        <end position="77"/>
    </location>
</feature>
<feature type="compositionally biased region" description="Acidic residues" evidence="3">
    <location>
        <begin position="78"/>
        <end position="89"/>
    </location>
</feature>
<feature type="modified residue" description="N-acetylmethionine" evidence="2">
    <location>
        <position position="1"/>
    </location>
</feature>
<feature type="modified residue" description="Phosphoserine" evidence="2">
    <location>
        <position position="66"/>
    </location>
</feature>
<reference key="1">
    <citation type="submission" date="2007-06" db="EMBL/GenBank/DDBJ databases">
        <authorList>
            <consortium name="NIH - Mammalian Gene Collection (MGC) project"/>
        </authorList>
    </citation>
    <scope>NUCLEOTIDE SEQUENCE [LARGE SCALE MRNA]</scope>
    <source>
        <strain>Crossbred X Angus</strain>
        <tissue>Liver</tissue>
    </source>
</reference>
<keyword id="KW-0007">Acetylation</keyword>
<keyword id="KW-0156">Chromatin regulator</keyword>
<keyword id="KW-0539">Nucleus</keyword>
<keyword id="KW-0597">Phosphoprotein</keyword>
<keyword id="KW-1185">Reference proteome</keyword>
<keyword id="KW-0804">Transcription</keyword>
<keyword id="KW-0805">Transcription regulation</keyword>
<gene>
    <name type="primary">COPRS</name>
    <name type="synonym">COPR5</name>
</gene>
<comment type="function">
    <text evidence="1">Histone-binding protein required for histone H4 methyltransferase activity of PRMT5. Specifically required for histone H4 'Arg-3' methylation mediated by PRMT5, but not histone H3 'Arg-8' methylation, suggesting that it modulates the substrate specificity of PRMT5. Specifically interacts with the N-terminus of histone H4 but not with histone H3, suggesting that it acts by promoting the association between histone H4 and PRMT5. Involved in CCNE1 promoter repression (By similarity). Plays a role in muscle cell differentiation by modulating the recruitment of PRMT5 to the promoter of genes involved in the coordination between cell cycle exit and muscle differentiation (By similarity).</text>
</comment>
<comment type="subunit">
    <text evidence="1">Interacts with PRMT5. Interacts with histone H4; specifically interacts with the N-terminus of histone H4 but not with histone H3. Interacts with CBFB. Found in a complex with PRMT5, RUNX1 and CBFB.</text>
</comment>
<comment type="subcellular location">
    <subcellularLocation>
        <location evidence="1">Nucleus</location>
    </subcellularLocation>
</comment>
<sequence length="185" mass="19950">MDPPTAGAQSLGAAEQPRGLQLPSGREAPPSPGTAFAPADHSSQEKATENATDRLANGAQSIPHDSPAHGEGTHCEEEGFAEDDEDSDGEPSPWELSEGMSGCLPKEQAGDLFHEDWDLELKADQGNPYDADDIQGCLSQEVRPWVCCAPQGDMIYDPSWHHPPPLIPHYSKMVFETGQFDDAED</sequence>